<accession>Q6AFZ7</accession>
<evidence type="ECO:0000255" key="1">
    <source>
        <dbReference type="HAMAP-Rule" id="MF_00444"/>
    </source>
</evidence>
<proteinExistence type="inferred from homology"/>
<comment type="function">
    <text evidence="1">Cleaves peptides in various proteins in a process that requires ATP hydrolysis. Has a chymotrypsin-like activity. Plays a major role in the degradation of misfolded proteins.</text>
</comment>
<comment type="catalytic activity">
    <reaction evidence="1">
        <text>Hydrolysis of proteins to small peptides in the presence of ATP and magnesium. alpha-casein is the usual test substrate. In the absence of ATP, only oligopeptides shorter than five residues are hydrolyzed (such as succinyl-Leu-Tyr-|-NHMec, and Leu-Tyr-Leu-|-Tyr-Trp, in which cleavage of the -Tyr-|-Leu- and -Tyr-|-Trp bonds also occurs).</text>
        <dbReference type="EC" id="3.4.21.92"/>
    </reaction>
</comment>
<comment type="subunit">
    <text evidence="1">Fourteen ClpP subunits assemble into 2 heptameric rings which stack back to back to give a disk-like structure with a central cavity, resembling the structure of eukaryotic proteasomes.</text>
</comment>
<comment type="subcellular location">
    <subcellularLocation>
        <location evidence="1">Cytoplasm</location>
    </subcellularLocation>
</comment>
<comment type="similarity">
    <text evidence="1">Belongs to the peptidase S14 family.</text>
</comment>
<gene>
    <name evidence="1" type="primary">clpP2</name>
    <name type="ordered locus">Lxx07860</name>
</gene>
<dbReference type="EC" id="3.4.21.92" evidence="1"/>
<dbReference type="EMBL" id="AE016822">
    <property type="protein sequence ID" value="AAT88698.1"/>
    <property type="molecule type" value="Genomic_DNA"/>
</dbReference>
<dbReference type="SMR" id="Q6AFZ7"/>
<dbReference type="STRING" id="281090.Lxx07860"/>
<dbReference type="MEROPS" id="S14.009"/>
<dbReference type="KEGG" id="lxx:Lxx07860"/>
<dbReference type="eggNOG" id="COG0740">
    <property type="taxonomic scope" value="Bacteria"/>
</dbReference>
<dbReference type="HOGENOM" id="CLU_058707_3_2_11"/>
<dbReference type="Proteomes" id="UP000001306">
    <property type="component" value="Chromosome"/>
</dbReference>
<dbReference type="GO" id="GO:0005737">
    <property type="term" value="C:cytoplasm"/>
    <property type="evidence" value="ECO:0007669"/>
    <property type="project" value="UniProtKB-SubCell"/>
</dbReference>
<dbReference type="GO" id="GO:0009368">
    <property type="term" value="C:endopeptidase Clp complex"/>
    <property type="evidence" value="ECO:0007669"/>
    <property type="project" value="TreeGrafter"/>
</dbReference>
<dbReference type="GO" id="GO:0004176">
    <property type="term" value="F:ATP-dependent peptidase activity"/>
    <property type="evidence" value="ECO:0007669"/>
    <property type="project" value="InterPro"/>
</dbReference>
<dbReference type="GO" id="GO:0051117">
    <property type="term" value="F:ATPase binding"/>
    <property type="evidence" value="ECO:0007669"/>
    <property type="project" value="TreeGrafter"/>
</dbReference>
<dbReference type="GO" id="GO:0004252">
    <property type="term" value="F:serine-type endopeptidase activity"/>
    <property type="evidence" value="ECO:0007669"/>
    <property type="project" value="UniProtKB-UniRule"/>
</dbReference>
<dbReference type="GO" id="GO:0006515">
    <property type="term" value="P:protein quality control for misfolded or incompletely synthesized proteins"/>
    <property type="evidence" value="ECO:0007669"/>
    <property type="project" value="TreeGrafter"/>
</dbReference>
<dbReference type="CDD" id="cd07017">
    <property type="entry name" value="S14_ClpP_2"/>
    <property type="match status" value="1"/>
</dbReference>
<dbReference type="FunFam" id="3.90.226.10:FF:000002">
    <property type="entry name" value="ATP-dependent Clp protease proteolytic subunit"/>
    <property type="match status" value="1"/>
</dbReference>
<dbReference type="Gene3D" id="3.90.226.10">
    <property type="entry name" value="2-enoyl-CoA Hydratase, Chain A, domain 1"/>
    <property type="match status" value="1"/>
</dbReference>
<dbReference type="HAMAP" id="MF_00444">
    <property type="entry name" value="ClpP"/>
    <property type="match status" value="1"/>
</dbReference>
<dbReference type="InterPro" id="IPR001907">
    <property type="entry name" value="ClpP"/>
</dbReference>
<dbReference type="InterPro" id="IPR029045">
    <property type="entry name" value="ClpP/crotonase-like_dom_sf"/>
</dbReference>
<dbReference type="InterPro" id="IPR023562">
    <property type="entry name" value="ClpP/TepA"/>
</dbReference>
<dbReference type="InterPro" id="IPR033135">
    <property type="entry name" value="ClpP_His_AS"/>
</dbReference>
<dbReference type="InterPro" id="IPR018215">
    <property type="entry name" value="ClpP_Ser_AS"/>
</dbReference>
<dbReference type="NCBIfam" id="NF001368">
    <property type="entry name" value="PRK00277.1"/>
    <property type="match status" value="1"/>
</dbReference>
<dbReference type="NCBIfam" id="NF009205">
    <property type="entry name" value="PRK12553.1"/>
    <property type="match status" value="1"/>
</dbReference>
<dbReference type="PANTHER" id="PTHR10381">
    <property type="entry name" value="ATP-DEPENDENT CLP PROTEASE PROTEOLYTIC SUBUNIT"/>
    <property type="match status" value="1"/>
</dbReference>
<dbReference type="PANTHER" id="PTHR10381:SF26">
    <property type="entry name" value="ATP-DEPENDENT CLP PROTEASE PROTEOLYTIC SUBUNIT-LIKE-RELATED"/>
    <property type="match status" value="1"/>
</dbReference>
<dbReference type="Pfam" id="PF00574">
    <property type="entry name" value="CLP_protease"/>
    <property type="match status" value="1"/>
</dbReference>
<dbReference type="PRINTS" id="PR00127">
    <property type="entry name" value="CLPPROTEASEP"/>
</dbReference>
<dbReference type="SUPFAM" id="SSF52096">
    <property type="entry name" value="ClpP/crotonase"/>
    <property type="match status" value="1"/>
</dbReference>
<dbReference type="PROSITE" id="PS00382">
    <property type="entry name" value="CLP_PROTEASE_HIS"/>
    <property type="match status" value="1"/>
</dbReference>
<dbReference type="PROSITE" id="PS00381">
    <property type="entry name" value="CLP_PROTEASE_SER"/>
    <property type="match status" value="1"/>
</dbReference>
<name>CLPP2_LEIXX</name>
<organism>
    <name type="scientific">Leifsonia xyli subsp. xyli (strain CTCB07)</name>
    <dbReference type="NCBI Taxonomy" id="281090"/>
    <lineage>
        <taxon>Bacteria</taxon>
        <taxon>Bacillati</taxon>
        <taxon>Actinomycetota</taxon>
        <taxon>Actinomycetes</taxon>
        <taxon>Micrococcales</taxon>
        <taxon>Microbacteriaceae</taxon>
        <taxon>Leifsonia</taxon>
    </lineage>
</organism>
<reference key="1">
    <citation type="journal article" date="2004" name="Mol. Plant Microbe Interact.">
        <title>The genome sequence of the Gram-positive sugarcane pathogen Leifsonia xyli subsp. xyli.</title>
        <authorList>
            <person name="Monteiro-Vitorello C.B."/>
            <person name="Camargo L.E.A."/>
            <person name="Van Sluys M.A."/>
            <person name="Kitajima J.P."/>
            <person name="Truffi D."/>
            <person name="do Amaral A.M."/>
            <person name="Harakava R."/>
            <person name="de Oliveira J.C.F."/>
            <person name="Wood D."/>
            <person name="de Oliveira M.C."/>
            <person name="Miyaki C.Y."/>
            <person name="Takita M.A."/>
            <person name="da Silva A.C.R."/>
            <person name="Furlan L.R."/>
            <person name="Carraro D.M."/>
            <person name="Camarotte G."/>
            <person name="Almeida N.F. Jr."/>
            <person name="Carrer H."/>
            <person name="Coutinho L.L."/>
            <person name="El-Dorry H.A."/>
            <person name="Ferro M.I.T."/>
            <person name="Gagliardi P.R."/>
            <person name="Giglioti E."/>
            <person name="Goldman M.H.S."/>
            <person name="Goldman G.H."/>
            <person name="Kimura E.T."/>
            <person name="Ferro E.S."/>
            <person name="Kuramae E.E."/>
            <person name="Lemos E.G.M."/>
            <person name="Lemos M.V.F."/>
            <person name="Mauro S.M.Z."/>
            <person name="Machado M.A."/>
            <person name="Marino C.L."/>
            <person name="Menck C.F."/>
            <person name="Nunes L.R."/>
            <person name="Oliveira R.C."/>
            <person name="Pereira G.G."/>
            <person name="Siqueira W."/>
            <person name="de Souza A.A."/>
            <person name="Tsai S.M."/>
            <person name="Zanca A.S."/>
            <person name="Simpson A.J.G."/>
            <person name="Brumbley S.M."/>
            <person name="Setubal J.C."/>
        </authorList>
    </citation>
    <scope>NUCLEOTIDE SEQUENCE [LARGE SCALE GENOMIC DNA]</scope>
    <source>
        <strain>CTCB07</strain>
    </source>
</reference>
<feature type="chain" id="PRO_0000179580" description="ATP-dependent Clp protease proteolytic subunit 2">
    <location>
        <begin position="1"/>
        <end position="223"/>
    </location>
</feature>
<feature type="active site" description="Nucleophile" evidence="1">
    <location>
        <position position="118"/>
    </location>
</feature>
<feature type="active site" evidence="1">
    <location>
        <position position="143"/>
    </location>
</feature>
<keyword id="KW-0963">Cytoplasm</keyword>
<keyword id="KW-0378">Hydrolase</keyword>
<keyword id="KW-0645">Protease</keyword>
<keyword id="KW-1185">Reference proteome</keyword>
<keyword id="KW-0720">Serine protease</keyword>
<sequence>MLGGSAHGGPVFGGVQAPGARYILPSFEERTAYGYKRQDPYAKLFEDRIIFLGVQVDDASADDIMAQLLVLESQDPDRDIVMYINSPGGSFTAMTAIYDTMQYVRPQIQTVVLGQAASAAAVLTAAGAPGKRLALPNARILIHQPAVGEAGHGQASDILIQSNEINRMRAWLEETLVKHSSRTLEQVNKDIERDNILSATEALKYGLIDQVLTSRKTLPALVK</sequence>
<protein>
    <recommendedName>
        <fullName evidence="1">ATP-dependent Clp protease proteolytic subunit 2</fullName>
        <ecNumber evidence="1">3.4.21.92</ecNumber>
    </recommendedName>
    <alternativeName>
        <fullName evidence="1">Endopeptidase Clp 2</fullName>
    </alternativeName>
</protein>